<protein>
    <recommendedName>
        <fullName evidence="2">Wadjet protein JetA</fullName>
    </recommendedName>
</protein>
<sequence>MKKLFECIPENYFNLFAGKNRGFYAEVAFLLYEQFHINRAGILYSLMKDEVQELIETKEELGECIDIEDEIEEKEQDSAGRANEVLRRLKKLKWIDVEVRDQFEEFIVLPVYSSRILAVLKEICENRTIEYQRYCFTTYQLLTGVEAEERPASAILESEKYSEQLYDELTILLHNMKNHMETIAAKDDIQQVLEHHFGEYKKDIIDKSYHRLRTSDHVSRYRNKILERIQTWFLDDKFMKRAAEDAVESGYSANWEEAMDGLSKKMYRVEEIYSNLDEICNQIDARHYQYLRAVLDRSRYLSTYNDSINYKISYILEHIGQMDENILDSSLFRLVQLRQLQEASLLSPRKKKGVYEPEQHEVNEISDEMREELKAENIRRMEKVMNRKKIQKFVLEAMKGRQEIEMSELNLQNEDDALYLIYVYLYGYSKGTGYKLSEEPPEFITQKGYTFSNRTIKREN</sequence>
<comment type="function">
    <text evidence="1">Component of antiplasmid transformation system Wadjet type I, composed of JetA, JetB, JetC and JetD. Expression of Wadjet type I in B.subtilis (strain BEST7003) reduces the transformation efficiency of plasmid pHCMC05.</text>
</comment>
<comment type="disruption phenotype">
    <text evidence="1">When this gene is missing the Wadjet system does not confer plasmid-transformation resistance in B.subtilis.</text>
</comment>
<name>JETA_BACCQ</name>
<reference evidence="3" key="1">
    <citation type="journal article" date="2009" name="J. Bacteriol.">
        <title>Complete genome sequence of the extremophilic Bacillus cereus strain Q1 with industrial applications.</title>
        <authorList>
            <person name="Xiong Z."/>
            <person name="Jiang Y."/>
            <person name="Qi D."/>
            <person name="Lu H."/>
            <person name="Yang F."/>
            <person name="Yang J."/>
            <person name="Chen L."/>
            <person name="Sun L."/>
            <person name="Xu X."/>
            <person name="Xue Y."/>
            <person name="Zhu Y."/>
            <person name="Jin Q."/>
        </authorList>
    </citation>
    <scope>NUCLEOTIDE SEQUENCE [LARGE SCALE GENOMIC DNA]</scope>
    <source>
        <strain>Q1</strain>
    </source>
</reference>
<reference key="2">
    <citation type="journal article" date="2018" name="Science">
        <title>Systematic discovery of antiphage defense systems in the microbial pangenome.</title>
        <authorList>
            <person name="Doron S."/>
            <person name="Melamed S."/>
            <person name="Ofir G."/>
            <person name="Leavitt A."/>
            <person name="Lopatina A."/>
            <person name="Keren M."/>
            <person name="Amitai G."/>
            <person name="Sorek R."/>
        </authorList>
    </citation>
    <scope>FUNCTION</scope>
    <scope>DISRUPTION PHENOTYPE</scope>
    <source>
        <strain>Q1</strain>
    </source>
</reference>
<organism>
    <name type="scientific">Bacillus cereus (strain Q1)</name>
    <dbReference type="NCBI Taxonomy" id="361100"/>
    <lineage>
        <taxon>Bacteria</taxon>
        <taxon>Bacillati</taxon>
        <taxon>Bacillota</taxon>
        <taxon>Bacilli</taxon>
        <taxon>Bacillales</taxon>
        <taxon>Bacillaceae</taxon>
        <taxon>Bacillus</taxon>
        <taxon>Bacillus cereus group</taxon>
    </lineage>
</organism>
<feature type="chain" id="PRO_0000456345" description="Wadjet protein JetA">
    <location>
        <begin position="1"/>
        <end position="460"/>
    </location>
</feature>
<accession>B9IS83</accession>
<gene>
    <name evidence="2" type="primary">jetA</name>
    <name evidence="3" type="ordered locus">BCQ_1015</name>
</gene>
<dbReference type="EMBL" id="CP000227">
    <property type="protein sequence ID" value="ACM11445.1"/>
    <property type="molecule type" value="Genomic_DNA"/>
</dbReference>
<dbReference type="KEGG" id="bcq:BCQ_1015"/>
<dbReference type="HOGENOM" id="CLU_045653_1_0_9"/>
<dbReference type="Proteomes" id="UP000000441">
    <property type="component" value="Chromosome"/>
</dbReference>
<dbReference type="InterPro" id="IPR043773">
    <property type="entry name" value="JetA"/>
</dbReference>
<dbReference type="Pfam" id="PF18982">
    <property type="entry name" value="JetA"/>
    <property type="match status" value="1"/>
</dbReference>
<dbReference type="SUPFAM" id="SSF55347">
    <property type="entry name" value="Glyceraldehyde-3-phosphate dehydrogenase-like, C-terminal domain"/>
    <property type="match status" value="1"/>
</dbReference>
<evidence type="ECO:0000269" key="1">
    <source>
    </source>
</evidence>
<evidence type="ECO:0000303" key="2">
    <source>
    </source>
</evidence>
<evidence type="ECO:0000312" key="3">
    <source>
        <dbReference type="EMBL" id="ACM11445.1"/>
    </source>
</evidence>
<proteinExistence type="predicted"/>